<sequence length="553" mass="62405">MDNSVILIDDSQNSVVIVDDDVEDGELEDDVVFVCPEELTRKEIEPPTDKIEEKHSNTSIQDTTEEDGDSLVFEVRFNKEAHFTSLQQQVLVALEGAFADKQIVFRDNPQELMISAFERSRTLPEEEPQDLFLIDTQPAAKLNAANVPSYKRCNADILDEQTEERKKLKAEAVNKCFRPKAQSSCFNCGDTEHSLRDCTKPRNNSRITRARKKMTSRTERYHVDTEQRFGHIRPGKISTKTRHAMGYSRGQLPFIFYRMRVLGYPPAWLEEAKVQSSGIALFNADGSEVTKSDEEEGESETFKYDVNKIVEYPGFNVQPKANCFDDFKHHNVPPFQESQSKENFIKSLGENVINGYKRKKLVDLPAPHDRVPAPSELLTSFDDYDMELEEETEDPPLPPSVPPPQPPPPEECEDGELTARSPSPSLEDLKAQQEELLQELDVNASHNTTANESKSPTDLDDTSETEVGPSAAESGNNEQSRSAPSTPFKASYEGTPLLKFSVYDRLPVGSNFKVGVSDVINFENLPDSTGKYEQMKDLLKNVREKMVKLQNEN</sequence>
<accession>Q2PE14</accession>
<accession>Q5BHV6</accession>
<accession>Q9W153</accession>
<reference key="1">
    <citation type="journal article" date="2000" name="Science">
        <title>The genome sequence of Drosophila melanogaster.</title>
        <authorList>
            <person name="Adams M.D."/>
            <person name="Celniker S.E."/>
            <person name="Holt R.A."/>
            <person name="Evans C.A."/>
            <person name="Gocayne J.D."/>
            <person name="Amanatides P.G."/>
            <person name="Scherer S.E."/>
            <person name="Li P.W."/>
            <person name="Hoskins R.A."/>
            <person name="Galle R.F."/>
            <person name="George R.A."/>
            <person name="Lewis S.E."/>
            <person name="Richards S."/>
            <person name="Ashburner M."/>
            <person name="Henderson S.N."/>
            <person name="Sutton G.G."/>
            <person name="Wortman J.R."/>
            <person name="Yandell M.D."/>
            <person name="Zhang Q."/>
            <person name="Chen L.X."/>
            <person name="Brandon R.C."/>
            <person name="Rogers Y.-H.C."/>
            <person name="Blazej R.G."/>
            <person name="Champe M."/>
            <person name="Pfeiffer B.D."/>
            <person name="Wan K.H."/>
            <person name="Doyle C."/>
            <person name="Baxter E.G."/>
            <person name="Helt G."/>
            <person name="Nelson C.R."/>
            <person name="Miklos G.L.G."/>
            <person name="Abril J.F."/>
            <person name="Agbayani A."/>
            <person name="An H.-J."/>
            <person name="Andrews-Pfannkoch C."/>
            <person name="Baldwin D."/>
            <person name="Ballew R.M."/>
            <person name="Basu A."/>
            <person name="Baxendale J."/>
            <person name="Bayraktaroglu L."/>
            <person name="Beasley E.M."/>
            <person name="Beeson K.Y."/>
            <person name="Benos P.V."/>
            <person name="Berman B.P."/>
            <person name="Bhandari D."/>
            <person name="Bolshakov S."/>
            <person name="Borkova D."/>
            <person name="Botchan M.R."/>
            <person name="Bouck J."/>
            <person name="Brokstein P."/>
            <person name="Brottier P."/>
            <person name="Burtis K.C."/>
            <person name="Busam D.A."/>
            <person name="Butler H."/>
            <person name="Cadieu E."/>
            <person name="Center A."/>
            <person name="Chandra I."/>
            <person name="Cherry J.M."/>
            <person name="Cawley S."/>
            <person name="Dahlke C."/>
            <person name="Davenport L.B."/>
            <person name="Davies P."/>
            <person name="de Pablos B."/>
            <person name="Delcher A."/>
            <person name="Deng Z."/>
            <person name="Mays A.D."/>
            <person name="Dew I."/>
            <person name="Dietz S.M."/>
            <person name="Dodson K."/>
            <person name="Doup L.E."/>
            <person name="Downes M."/>
            <person name="Dugan-Rocha S."/>
            <person name="Dunkov B.C."/>
            <person name="Dunn P."/>
            <person name="Durbin K.J."/>
            <person name="Evangelista C.C."/>
            <person name="Ferraz C."/>
            <person name="Ferriera S."/>
            <person name="Fleischmann W."/>
            <person name="Fosler C."/>
            <person name="Gabrielian A.E."/>
            <person name="Garg N.S."/>
            <person name="Gelbart W.M."/>
            <person name="Glasser K."/>
            <person name="Glodek A."/>
            <person name="Gong F."/>
            <person name="Gorrell J.H."/>
            <person name="Gu Z."/>
            <person name="Guan P."/>
            <person name="Harris M."/>
            <person name="Harris N.L."/>
            <person name="Harvey D.A."/>
            <person name="Heiman T.J."/>
            <person name="Hernandez J.R."/>
            <person name="Houck J."/>
            <person name="Hostin D."/>
            <person name="Houston K.A."/>
            <person name="Howland T.J."/>
            <person name="Wei M.-H."/>
            <person name="Ibegwam C."/>
            <person name="Jalali M."/>
            <person name="Kalush F."/>
            <person name="Karpen G.H."/>
            <person name="Ke Z."/>
            <person name="Kennison J.A."/>
            <person name="Ketchum K.A."/>
            <person name="Kimmel B.E."/>
            <person name="Kodira C.D."/>
            <person name="Kraft C.L."/>
            <person name="Kravitz S."/>
            <person name="Kulp D."/>
            <person name="Lai Z."/>
            <person name="Lasko P."/>
            <person name="Lei Y."/>
            <person name="Levitsky A.A."/>
            <person name="Li J.H."/>
            <person name="Li Z."/>
            <person name="Liang Y."/>
            <person name="Lin X."/>
            <person name="Liu X."/>
            <person name="Mattei B."/>
            <person name="McIntosh T.C."/>
            <person name="McLeod M.P."/>
            <person name="McPherson D."/>
            <person name="Merkulov G."/>
            <person name="Milshina N.V."/>
            <person name="Mobarry C."/>
            <person name="Morris J."/>
            <person name="Moshrefi A."/>
            <person name="Mount S.M."/>
            <person name="Moy M."/>
            <person name="Murphy B."/>
            <person name="Murphy L."/>
            <person name="Muzny D.M."/>
            <person name="Nelson D.L."/>
            <person name="Nelson D.R."/>
            <person name="Nelson K.A."/>
            <person name="Nixon K."/>
            <person name="Nusskern D.R."/>
            <person name="Pacleb J.M."/>
            <person name="Palazzolo M."/>
            <person name="Pittman G.S."/>
            <person name="Pan S."/>
            <person name="Pollard J."/>
            <person name="Puri V."/>
            <person name="Reese M.G."/>
            <person name="Reinert K."/>
            <person name="Remington K."/>
            <person name="Saunders R.D.C."/>
            <person name="Scheeler F."/>
            <person name="Shen H."/>
            <person name="Shue B.C."/>
            <person name="Siden-Kiamos I."/>
            <person name="Simpson M."/>
            <person name="Skupski M.P."/>
            <person name="Smith T.J."/>
            <person name="Spier E."/>
            <person name="Spradling A.C."/>
            <person name="Stapleton M."/>
            <person name="Strong R."/>
            <person name="Sun E."/>
            <person name="Svirskas R."/>
            <person name="Tector C."/>
            <person name="Turner R."/>
            <person name="Venter E."/>
            <person name="Wang A.H."/>
            <person name="Wang X."/>
            <person name="Wang Z.-Y."/>
            <person name="Wassarman D.A."/>
            <person name="Weinstock G.M."/>
            <person name="Weissenbach J."/>
            <person name="Williams S.M."/>
            <person name="Woodage T."/>
            <person name="Worley K.C."/>
            <person name="Wu D."/>
            <person name="Yang S."/>
            <person name="Yao Q.A."/>
            <person name="Ye J."/>
            <person name="Yeh R.-F."/>
            <person name="Zaveri J.S."/>
            <person name="Zhan M."/>
            <person name="Zhang G."/>
            <person name="Zhao Q."/>
            <person name="Zheng L."/>
            <person name="Zheng X.H."/>
            <person name="Zhong F.N."/>
            <person name="Zhong W."/>
            <person name="Zhou X."/>
            <person name="Zhu S.C."/>
            <person name="Zhu X."/>
            <person name="Smith H.O."/>
            <person name="Gibbs R.A."/>
            <person name="Myers E.W."/>
            <person name="Rubin G.M."/>
            <person name="Venter J.C."/>
        </authorList>
    </citation>
    <scope>NUCLEOTIDE SEQUENCE [LARGE SCALE GENOMIC DNA]</scope>
    <source>
        <strain>Berkeley</strain>
    </source>
</reference>
<reference key="2">
    <citation type="journal article" date="2002" name="Genome Biol.">
        <title>Annotation of the Drosophila melanogaster euchromatic genome: a systematic review.</title>
        <authorList>
            <person name="Misra S."/>
            <person name="Crosby M.A."/>
            <person name="Mungall C.J."/>
            <person name="Matthews B.B."/>
            <person name="Campbell K.S."/>
            <person name="Hradecky P."/>
            <person name="Huang Y."/>
            <person name="Kaminker J.S."/>
            <person name="Millburn G.H."/>
            <person name="Prochnik S.E."/>
            <person name="Smith C.D."/>
            <person name="Tupy J.L."/>
            <person name="Whitfield E.J."/>
            <person name="Bayraktaroglu L."/>
            <person name="Berman B.P."/>
            <person name="Bettencourt B.R."/>
            <person name="Celniker S.E."/>
            <person name="de Grey A.D.N.J."/>
            <person name="Drysdale R.A."/>
            <person name="Harris N.L."/>
            <person name="Richter J."/>
            <person name="Russo S."/>
            <person name="Schroeder A.J."/>
            <person name="Shu S.Q."/>
            <person name="Stapleton M."/>
            <person name="Yamada C."/>
            <person name="Ashburner M."/>
            <person name="Gelbart W.M."/>
            <person name="Rubin G.M."/>
            <person name="Lewis S.E."/>
        </authorList>
    </citation>
    <scope>GENOME REANNOTATION</scope>
    <source>
        <strain>Berkeley</strain>
    </source>
</reference>
<reference key="3">
    <citation type="journal article" date="2002" name="Genome Biol.">
        <title>A Drosophila full-length cDNA resource.</title>
        <authorList>
            <person name="Stapleton M."/>
            <person name="Carlson J.W."/>
            <person name="Brokstein P."/>
            <person name="Yu C."/>
            <person name="Champe M."/>
            <person name="George R.A."/>
            <person name="Guarin H."/>
            <person name="Kronmiller B."/>
            <person name="Pacleb J.M."/>
            <person name="Park S."/>
            <person name="Wan K.H."/>
            <person name="Rubin G.M."/>
            <person name="Celniker S.E."/>
        </authorList>
    </citation>
    <scope>NUCLEOTIDE SEQUENCE [LARGE SCALE MRNA]</scope>
    <source>
        <strain>Berkeley</strain>
        <tissue>Embryo</tissue>
    </source>
</reference>
<reference key="4">
    <citation type="submission" date="2005-03" db="EMBL/GenBank/DDBJ databases">
        <authorList>
            <person name="Stapleton M."/>
            <person name="Carlson J.W."/>
            <person name="Chavez C."/>
            <person name="Frise E."/>
            <person name="George R.A."/>
            <person name="Pacleb J.M."/>
            <person name="Park S."/>
            <person name="Wan K.H."/>
            <person name="Yu C."/>
            <person name="Rubin G.M."/>
            <person name="Celniker S.E."/>
        </authorList>
    </citation>
    <scope>NUCLEOTIDE SEQUENCE [LARGE SCALE MRNA]</scope>
    <source>
        <strain>Berkeley</strain>
        <tissue>Testis</tissue>
    </source>
</reference>
<reference key="5">
    <citation type="journal article" date="2008" name="J. Proteome Res.">
        <title>Phosphoproteome analysis of Drosophila melanogaster embryos.</title>
        <authorList>
            <person name="Zhai B."/>
            <person name="Villen J."/>
            <person name="Beausoleil S.A."/>
            <person name="Mintseris J."/>
            <person name="Gygi S.P."/>
        </authorList>
    </citation>
    <scope>PHOSPHORYLATION [LARGE SCALE ANALYSIS] AT SER-59; SER-292; SER-347; TYR-356; SER-421 AND SER-423</scope>
    <scope>IDENTIFICATION BY MASS SPECTROMETRY</scope>
    <source>
        <tissue>Embryo</tissue>
    </source>
</reference>
<feature type="chain" id="PRO_0000355635" description="Zinc finger CCHC domain-containing protein 8 homolog">
    <location>
        <begin position="1"/>
        <end position="553"/>
    </location>
</feature>
<feature type="zinc finger region" description="CCHC-type" evidence="2">
    <location>
        <begin position="183"/>
        <end position="200"/>
    </location>
</feature>
<feature type="region of interest" description="Disordered" evidence="3">
    <location>
        <begin position="388"/>
        <end position="492"/>
    </location>
</feature>
<feature type="compositionally biased region" description="Pro residues" evidence="3">
    <location>
        <begin position="395"/>
        <end position="409"/>
    </location>
</feature>
<feature type="compositionally biased region" description="Polar residues" evidence="3">
    <location>
        <begin position="444"/>
        <end position="456"/>
    </location>
</feature>
<feature type="compositionally biased region" description="Polar residues" evidence="3">
    <location>
        <begin position="473"/>
        <end position="485"/>
    </location>
</feature>
<feature type="modified residue" description="Phosphoserine" evidence="4">
    <location>
        <position position="59"/>
    </location>
</feature>
<feature type="modified residue" description="Phosphoserine" evidence="4">
    <location>
        <position position="292"/>
    </location>
</feature>
<feature type="modified residue" description="Phosphoserine" evidence="4">
    <location>
        <position position="347"/>
    </location>
</feature>
<feature type="modified residue" description="Phosphotyrosine" evidence="4">
    <location>
        <position position="356"/>
    </location>
</feature>
<feature type="modified residue" description="Phosphoserine" evidence="4">
    <location>
        <position position="421"/>
    </location>
</feature>
<feature type="modified residue" description="Phosphoserine" evidence="4">
    <location>
        <position position="423"/>
    </location>
</feature>
<feature type="sequence conflict" description="In Ref. 4; AAX33616." evidence="5" ref="4">
    <original>I</original>
    <variation>V</variation>
    <location>
        <position position="44"/>
    </location>
</feature>
<feature type="sequence conflict" description="In Ref. 4; AAX33616/ACH92321." evidence="5" ref="4">
    <original>YEGTPLLKFSVYDRLPVGSNFKVGVSDVINFENLPDSTGKYEQMKDLLKNVREKMVKLQNEN</original>
    <variation>AM</variation>
    <location>
        <begin position="492"/>
        <end position="553"/>
    </location>
</feature>
<protein>
    <recommendedName>
        <fullName>Zinc finger CCHC domain-containing protein 8 homolog</fullName>
    </recommendedName>
</protein>
<comment type="function">
    <text evidence="1">Scaffolding subunit of the trimeric nuclear exosome targeting (NEXT) complex, a complex that directs a subset of non-coding short-lived RNAs for exosomal degradation. The RNA exosome is fundamental for the degradation of RNA in eukaryotic nuclei. May be involved in pre-mRNA splicing.</text>
</comment>
<comment type="interaction">
    <interactant intactId="EBI-123443">
        <id>Q2PE14</id>
    </interactant>
    <interactant intactId="EBI-142275">
        <id>Q9VPK4</id>
        <label>dRbm7</label>
    </interactant>
    <organismsDiffer>false</organismsDiffer>
    <experiments>3</experiments>
</comment>
<comment type="subcellular location">
    <subcellularLocation>
        <location evidence="1">Nucleus</location>
        <location evidence="1">Nucleoplasm</location>
    </subcellularLocation>
    <text evidence="1">Excluded from nucleolus.</text>
</comment>
<comment type="similarity">
    <text evidence="5">Belongs to the ZCCHC8 family.</text>
</comment>
<organism>
    <name type="scientific">Drosophila melanogaster</name>
    <name type="common">Fruit fly</name>
    <dbReference type="NCBI Taxonomy" id="7227"/>
    <lineage>
        <taxon>Eukaryota</taxon>
        <taxon>Metazoa</taxon>
        <taxon>Ecdysozoa</taxon>
        <taxon>Arthropoda</taxon>
        <taxon>Hexapoda</taxon>
        <taxon>Insecta</taxon>
        <taxon>Pterygota</taxon>
        <taxon>Neoptera</taxon>
        <taxon>Endopterygota</taxon>
        <taxon>Diptera</taxon>
        <taxon>Brachycera</taxon>
        <taxon>Muscomorpha</taxon>
        <taxon>Ephydroidea</taxon>
        <taxon>Drosophilidae</taxon>
        <taxon>Drosophila</taxon>
        <taxon>Sophophora</taxon>
    </lineage>
</organism>
<dbReference type="EMBL" id="AE013599">
    <property type="protein sequence ID" value="AAF47224.1"/>
    <property type="molecule type" value="Genomic_DNA"/>
</dbReference>
<dbReference type="EMBL" id="AE013599">
    <property type="protein sequence ID" value="ABC66045.2"/>
    <property type="molecule type" value="Genomic_DNA"/>
</dbReference>
<dbReference type="EMBL" id="AY061482">
    <property type="protein sequence ID" value="AAL29030.1"/>
    <property type="molecule type" value="mRNA"/>
</dbReference>
<dbReference type="EMBL" id="BT021468">
    <property type="protein sequence ID" value="AAX33616.1"/>
    <property type="molecule type" value="mRNA"/>
</dbReference>
<dbReference type="EMBL" id="BT044256">
    <property type="protein sequence ID" value="ACH92321.1"/>
    <property type="molecule type" value="mRNA"/>
</dbReference>
<dbReference type="RefSeq" id="NP_001033971.2">
    <property type="nucleotide sequence ID" value="NM_001038882.3"/>
</dbReference>
<dbReference type="RefSeq" id="NP_611929.1">
    <property type="nucleotide sequence ID" value="NM_138085.4"/>
</dbReference>
<dbReference type="SMR" id="Q2PE14"/>
<dbReference type="BioGRID" id="63491">
    <property type="interactions" value="8"/>
</dbReference>
<dbReference type="FunCoup" id="Q2PE14">
    <property type="interactions" value="102"/>
</dbReference>
<dbReference type="IntAct" id="Q2PE14">
    <property type="interactions" value="6"/>
</dbReference>
<dbReference type="STRING" id="7227.FBpp0289717"/>
<dbReference type="iPTMnet" id="Q2PE14"/>
<dbReference type="PaxDb" id="7227-FBpp0289717"/>
<dbReference type="DNASU" id="37919"/>
<dbReference type="EnsemblMetazoa" id="FBtr0072344">
    <property type="protein sequence ID" value="FBpp0072251"/>
    <property type="gene ID" value="FBgn0035021"/>
</dbReference>
<dbReference type="EnsemblMetazoa" id="FBtr0300490">
    <property type="protein sequence ID" value="FBpp0289717"/>
    <property type="gene ID" value="FBgn0035021"/>
</dbReference>
<dbReference type="GeneID" id="37919"/>
<dbReference type="KEGG" id="dme:Dmel_CG4622"/>
<dbReference type="UCSC" id="CG4622-RA">
    <property type="organism name" value="d. melanogaster"/>
</dbReference>
<dbReference type="UCSC" id="CG4622-RB">
    <property type="organism name" value="d. melanogaster"/>
</dbReference>
<dbReference type="AGR" id="FB:FBgn0035021"/>
<dbReference type="FlyBase" id="FBgn0035021">
    <property type="gene designation" value="CG4622"/>
</dbReference>
<dbReference type="VEuPathDB" id="VectorBase:FBgn0035021"/>
<dbReference type="eggNOG" id="KOG2673">
    <property type="taxonomic scope" value="Eukaryota"/>
</dbReference>
<dbReference type="GeneTree" id="ENSGT00390000011475"/>
<dbReference type="HOGENOM" id="CLU_611513_0_0_1"/>
<dbReference type="InParanoid" id="Q2PE14"/>
<dbReference type="OMA" id="MFYRLRV"/>
<dbReference type="OrthoDB" id="8026949at2759"/>
<dbReference type="PhylomeDB" id="Q2PE14"/>
<dbReference type="BioGRID-ORCS" id="37919">
    <property type="hits" value="0 hits in 1 CRISPR screen"/>
</dbReference>
<dbReference type="GenomeRNAi" id="37919"/>
<dbReference type="PRO" id="PR:Q2PE14"/>
<dbReference type="Proteomes" id="UP000000803">
    <property type="component" value="Chromosome 2R"/>
</dbReference>
<dbReference type="Bgee" id="FBgn0035021">
    <property type="expression patterns" value="Expressed in spermatocyte in testis and 83 other cell types or tissues"/>
</dbReference>
<dbReference type="GO" id="GO:0071013">
    <property type="term" value="C:catalytic step 2 spliceosome"/>
    <property type="evidence" value="ECO:0000318"/>
    <property type="project" value="GO_Central"/>
</dbReference>
<dbReference type="GO" id="GO:0005654">
    <property type="term" value="C:nucleoplasm"/>
    <property type="evidence" value="ECO:0007669"/>
    <property type="project" value="UniProtKB-SubCell"/>
</dbReference>
<dbReference type="GO" id="GO:0003723">
    <property type="term" value="F:RNA binding"/>
    <property type="evidence" value="ECO:0000318"/>
    <property type="project" value="GO_Central"/>
</dbReference>
<dbReference type="GO" id="GO:0008270">
    <property type="term" value="F:zinc ion binding"/>
    <property type="evidence" value="ECO:0007669"/>
    <property type="project" value="UniProtKB-KW"/>
</dbReference>
<dbReference type="GO" id="GO:0006396">
    <property type="term" value="P:RNA processing"/>
    <property type="evidence" value="ECO:0000318"/>
    <property type="project" value="GO_Central"/>
</dbReference>
<dbReference type="InterPro" id="IPR052115">
    <property type="entry name" value="NEXT_complex_subunit_ZCCHC8"/>
</dbReference>
<dbReference type="InterPro" id="IPR006568">
    <property type="entry name" value="PSP_pro-rich"/>
</dbReference>
<dbReference type="InterPro" id="IPR001878">
    <property type="entry name" value="Znf_CCHC"/>
</dbReference>
<dbReference type="PANTHER" id="PTHR13316:SF0">
    <property type="entry name" value="ZINC FINGER CCHC DOMAIN-CONTAINING PROTEIN 8"/>
    <property type="match status" value="1"/>
</dbReference>
<dbReference type="PANTHER" id="PTHR13316">
    <property type="entry name" value="ZINC FINGER, CCHC DOMAIN CONTAINING 8"/>
    <property type="match status" value="1"/>
</dbReference>
<dbReference type="Pfam" id="PF04046">
    <property type="entry name" value="PSP"/>
    <property type="match status" value="1"/>
</dbReference>
<dbReference type="Pfam" id="PF00098">
    <property type="entry name" value="zf-CCHC"/>
    <property type="match status" value="1"/>
</dbReference>
<dbReference type="SMART" id="SM00581">
    <property type="entry name" value="PSP"/>
    <property type="match status" value="1"/>
</dbReference>
<dbReference type="SMART" id="SM00343">
    <property type="entry name" value="ZnF_C2HC"/>
    <property type="match status" value="1"/>
</dbReference>
<dbReference type="PROSITE" id="PS50158">
    <property type="entry name" value="ZF_CCHC"/>
    <property type="match status" value="1"/>
</dbReference>
<name>ZCHC8_DROME</name>
<proteinExistence type="evidence at protein level"/>
<gene>
    <name type="ORF">CG4622</name>
</gene>
<keyword id="KW-0479">Metal-binding</keyword>
<keyword id="KW-0539">Nucleus</keyword>
<keyword id="KW-0597">Phosphoprotein</keyword>
<keyword id="KW-1185">Reference proteome</keyword>
<keyword id="KW-0862">Zinc</keyword>
<keyword id="KW-0863">Zinc-finger</keyword>
<evidence type="ECO:0000250" key="1">
    <source>
        <dbReference type="UniProtKB" id="Q6NZY4"/>
    </source>
</evidence>
<evidence type="ECO:0000255" key="2">
    <source>
        <dbReference type="PROSITE-ProRule" id="PRU00047"/>
    </source>
</evidence>
<evidence type="ECO:0000256" key="3">
    <source>
        <dbReference type="SAM" id="MobiDB-lite"/>
    </source>
</evidence>
<evidence type="ECO:0000269" key="4">
    <source>
    </source>
</evidence>
<evidence type="ECO:0000305" key="5"/>